<organism>
    <name type="scientific">Streptococcus pyogenes serotype M2 (strain MGAS10270)</name>
    <dbReference type="NCBI Taxonomy" id="370552"/>
    <lineage>
        <taxon>Bacteria</taxon>
        <taxon>Bacillati</taxon>
        <taxon>Bacillota</taxon>
        <taxon>Bacilli</taxon>
        <taxon>Lactobacillales</taxon>
        <taxon>Streptococcaceae</taxon>
        <taxon>Streptococcus</taxon>
    </lineage>
</organism>
<reference key="1">
    <citation type="journal article" date="2006" name="Proc. Natl. Acad. Sci. U.S.A.">
        <title>Molecular genetic anatomy of inter- and intraserotype variation in the human bacterial pathogen group A Streptococcus.</title>
        <authorList>
            <person name="Beres S.B."/>
            <person name="Richter E.W."/>
            <person name="Nagiec M.J."/>
            <person name="Sumby P."/>
            <person name="Porcella S.F."/>
            <person name="DeLeo F.R."/>
            <person name="Musser J.M."/>
        </authorList>
    </citation>
    <scope>NUCLEOTIDE SEQUENCE [LARGE SCALE GENOMIC DNA]</scope>
    <source>
        <strain>MGAS10270</strain>
    </source>
</reference>
<proteinExistence type="inferred from homology"/>
<feature type="chain" id="PRO_1000068168" description="Large ribosomal subunit protein uL23">
    <location>
        <begin position="1"/>
        <end position="98"/>
    </location>
</feature>
<comment type="function">
    <text evidence="1">One of the early assembly proteins it binds 23S rRNA. One of the proteins that surrounds the polypeptide exit tunnel on the outside of the ribosome. Forms the main docking site for trigger factor binding to the ribosome.</text>
</comment>
<comment type="subunit">
    <text evidence="1">Part of the 50S ribosomal subunit. Contacts protein L29, and trigger factor when it is bound to the ribosome.</text>
</comment>
<comment type="similarity">
    <text evidence="1">Belongs to the universal ribosomal protein uL23 family.</text>
</comment>
<gene>
    <name evidence="1" type="primary">rplW</name>
    <name type="ordered locus">MGAS10270_Spy0048</name>
</gene>
<protein>
    <recommendedName>
        <fullName evidence="1">Large ribosomal subunit protein uL23</fullName>
    </recommendedName>
    <alternativeName>
        <fullName evidence="2">50S ribosomal protein L23</fullName>
    </alternativeName>
</protein>
<evidence type="ECO:0000255" key="1">
    <source>
        <dbReference type="HAMAP-Rule" id="MF_01369"/>
    </source>
</evidence>
<evidence type="ECO:0000305" key="2"/>
<dbReference type="EMBL" id="CP000260">
    <property type="protein sequence ID" value="ABF33113.1"/>
    <property type="molecule type" value="Genomic_DNA"/>
</dbReference>
<dbReference type="RefSeq" id="WP_002986656.1">
    <property type="nucleotide sequence ID" value="NZ_CVUH01000001.1"/>
</dbReference>
<dbReference type="SMR" id="Q1JJ60"/>
<dbReference type="KEGG" id="sph:MGAS10270_Spy0048"/>
<dbReference type="HOGENOM" id="CLU_037562_3_2_9"/>
<dbReference type="Proteomes" id="UP000002436">
    <property type="component" value="Chromosome"/>
</dbReference>
<dbReference type="GO" id="GO:1990904">
    <property type="term" value="C:ribonucleoprotein complex"/>
    <property type="evidence" value="ECO:0007669"/>
    <property type="project" value="UniProtKB-KW"/>
</dbReference>
<dbReference type="GO" id="GO:0005840">
    <property type="term" value="C:ribosome"/>
    <property type="evidence" value="ECO:0007669"/>
    <property type="project" value="UniProtKB-KW"/>
</dbReference>
<dbReference type="GO" id="GO:0019843">
    <property type="term" value="F:rRNA binding"/>
    <property type="evidence" value="ECO:0007669"/>
    <property type="project" value="UniProtKB-UniRule"/>
</dbReference>
<dbReference type="GO" id="GO:0003735">
    <property type="term" value="F:structural constituent of ribosome"/>
    <property type="evidence" value="ECO:0007669"/>
    <property type="project" value="InterPro"/>
</dbReference>
<dbReference type="GO" id="GO:0006412">
    <property type="term" value="P:translation"/>
    <property type="evidence" value="ECO:0007669"/>
    <property type="project" value="UniProtKB-UniRule"/>
</dbReference>
<dbReference type="FunFam" id="3.30.70.330:FF:000001">
    <property type="entry name" value="50S ribosomal protein L23"/>
    <property type="match status" value="1"/>
</dbReference>
<dbReference type="Gene3D" id="3.30.70.330">
    <property type="match status" value="1"/>
</dbReference>
<dbReference type="HAMAP" id="MF_01369_B">
    <property type="entry name" value="Ribosomal_uL23_B"/>
    <property type="match status" value="1"/>
</dbReference>
<dbReference type="InterPro" id="IPR012677">
    <property type="entry name" value="Nucleotide-bd_a/b_plait_sf"/>
</dbReference>
<dbReference type="InterPro" id="IPR013025">
    <property type="entry name" value="Ribosomal_uL23-like"/>
</dbReference>
<dbReference type="InterPro" id="IPR012678">
    <property type="entry name" value="Ribosomal_uL23/eL15/eS24_sf"/>
</dbReference>
<dbReference type="InterPro" id="IPR001014">
    <property type="entry name" value="Ribosomal_uL23_CS"/>
</dbReference>
<dbReference type="NCBIfam" id="NF004361">
    <property type="entry name" value="PRK05738.2-1"/>
    <property type="match status" value="1"/>
</dbReference>
<dbReference type="NCBIfam" id="NF004363">
    <property type="entry name" value="PRK05738.2-4"/>
    <property type="match status" value="1"/>
</dbReference>
<dbReference type="PANTHER" id="PTHR11620">
    <property type="entry name" value="60S RIBOSOMAL PROTEIN L23A"/>
    <property type="match status" value="1"/>
</dbReference>
<dbReference type="Pfam" id="PF00276">
    <property type="entry name" value="Ribosomal_L23"/>
    <property type="match status" value="1"/>
</dbReference>
<dbReference type="SUPFAM" id="SSF54189">
    <property type="entry name" value="Ribosomal proteins S24e, L23 and L15e"/>
    <property type="match status" value="1"/>
</dbReference>
<dbReference type="PROSITE" id="PS00050">
    <property type="entry name" value="RIBOSOMAL_L23"/>
    <property type="match status" value="1"/>
</dbReference>
<accession>Q1JJ60</accession>
<sequence>MNLYDVIKKPVITEKSMIALEAGKYTFEVDTRAHKLLIKQAVEAAFDGVKVASVNTVNVKPKAKRVGRYTGFTSKTKKAIITLTADSKAIELFAAEAE</sequence>
<keyword id="KW-0687">Ribonucleoprotein</keyword>
<keyword id="KW-0689">Ribosomal protein</keyword>
<keyword id="KW-0694">RNA-binding</keyword>
<keyword id="KW-0699">rRNA-binding</keyword>
<name>RL23_STRPD</name>